<name>PGRP2_PIG</name>
<protein>
    <recommendedName>
        <fullName>N-acetylmuramoyl-L-alanine amidase</fullName>
        <ecNumber>3.5.1.28</ecNumber>
    </recommendedName>
    <alternativeName>
        <fullName>Peptidoglycan recognition protein 2</fullName>
    </alternativeName>
    <alternativeName>
        <fullName>Peptidoglycan recognition protein long</fullName>
        <shortName>PGRP-L</shortName>
    </alternativeName>
</protein>
<comment type="function">
    <text>May play a scavenger role by digesting biologically active peptidoglycan (PGN) into biologically inactive fragments. Has no direct bacteriolytic activity.</text>
</comment>
<comment type="catalytic activity">
    <reaction>
        <text>Hydrolyzes the link between N-acetylmuramoyl residues and L-amino acid residues in certain cell-wall glycopeptides.</text>
        <dbReference type="EC" id="3.5.1.28"/>
    </reaction>
</comment>
<comment type="cofactor">
    <cofactor evidence="2">
        <name>Zn(2+)</name>
        <dbReference type="ChEBI" id="CHEBI:29105"/>
    </cofactor>
</comment>
<comment type="subcellular location">
    <subcellularLocation>
        <location>Secreted</location>
    </subcellularLocation>
    <subcellularLocation>
        <location>Membrane</location>
    </subcellularLocation>
</comment>
<comment type="alternative products">
    <event type="alternative splicing"/>
    <isoform>
        <id>Q866Y3-1</id>
        <name>B</name>
        <sequence type="displayed"/>
    </isoform>
    <isoform>
        <id>Q866Y3-2</id>
        <name>A</name>
        <sequence type="described" ref="VSP_009082 VSP_009083"/>
    </isoform>
</comment>
<comment type="similarity">
    <text evidence="8">Belongs to the N-acetylmuramoyl-L-alanine amidase 2 family.</text>
</comment>
<keyword id="KW-0025">Alternative splicing</keyword>
<keyword id="KW-1015">Disulfide bond</keyword>
<keyword id="KW-0325">Glycoprotein</keyword>
<keyword id="KW-0378">Hydrolase</keyword>
<keyword id="KW-0391">Immunity</keyword>
<keyword id="KW-0472">Membrane</keyword>
<keyword id="KW-0479">Metal-binding</keyword>
<keyword id="KW-0597">Phosphoprotein</keyword>
<keyword id="KW-1185">Reference proteome</keyword>
<keyword id="KW-0964">Secreted</keyword>
<keyword id="KW-0732">Signal</keyword>
<keyword id="KW-0862">Zinc</keyword>
<sequence>MSPGNWKTTMVVRGILLILYGLLLQPEPGTATLPLLMDSVIQALAELERKSPATEAGHIASMWLLSAQGSGAHNPLPRFLLEGQSLKTAKLAPPSLSPEFQGLIEEVARHGVQDGKEYGVVLAPDGSTVAVEPLLAGLEAGLQGHRVVNLPLDSTATFPDIGATVPDLKATSSAHKDTSADVNSADVGTLSPNVRDTDVDAEVTFLDVRPSSTGVQVTSPDVQVSSPDTKAKSPTTVDSLLMVTLARDLGLHFLQGAQTESNSGLGTEGCWDQLSLPRTFTLLDPEASPLTMAFLNGALDGALLGDYLSKVPEPRPPLSHLLNQYYGAGVAGDPGLRSNFRRQNGAALTLTPNLTQQVWGTLILLQRLEPAHPQLQGMSQEQLAQVATHAAKEFTEAFLGCPAIHPRCRWGAAPYRGSPKPLKLPLGFLYIHHTYVPARPCTDFALCAANMRSMQRFHLDTQGWDDIGYSFVVGSDGYVYEGRGWHWVGAHTRDHNSRGFGVALIGNYTAELPSEAALRAVRDELPHCAVRAGLLQPDYALLGHRQLVRTDCPGDALFNMLRTWPRFNMNVKPRTARRASGRSKRRLPLMIPLATDLQ</sequence>
<feature type="signal peptide" evidence="5">
    <location>
        <begin position="1"/>
        <end position="31"/>
    </location>
</feature>
<feature type="chain" id="PRO_0000023922" description="N-acetylmuramoyl-L-alanine amidase">
    <location>
        <begin position="32"/>
        <end position="598"/>
    </location>
</feature>
<feature type="domain" description="N-acetylmuramoyl-L-alanine amidase" evidence="5">
    <location>
        <begin position="428"/>
        <end position="554"/>
    </location>
</feature>
<feature type="region of interest" description="Disordered" evidence="6">
    <location>
        <begin position="172"/>
        <end position="194"/>
    </location>
</feature>
<feature type="region of interest" description="Disordered" evidence="6">
    <location>
        <begin position="212"/>
        <end position="233"/>
    </location>
</feature>
<feature type="binding site" evidence="3">
    <location>
        <position position="432"/>
    </location>
    <ligand>
        <name>Zn(2+)</name>
        <dbReference type="ChEBI" id="CHEBI:29105"/>
    </ligand>
</feature>
<feature type="binding site" evidence="3">
    <location>
        <position position="544"/>
    </location>
    <ligand>
        <name>Zn(2+)</name>
        <dbReference type="ChEBI" id="CHEBI:29105"/>
    </ligand>
</feature>
<feature type="binding site" evidence="3">
    <location>
        <position position="552"/>
    </location>
    <ligand>
        <name>Zn(2+)</name>
        <dbReference type="ChEBI" id="CHEBI:29105"/>
    </ligand>
</feature>
<feature type="site" description="Important for catalytic activity; essential for amidase activity and zinc hydrate coordination" evidence="2">
    <location>
        <position position="469"/>
    </location>
</feature>
<feature type="modified residue" description="Phosphoserine" evidence="4">
    <location>
        <position position="261"/>
    </location>
</feature>
<feature type="glycosylation site" description="N-linked (GlcNAc...) asparagine" evidence="5">
    <location>
        <position position="353"/>
    </location>
</feature>
<feature type="glycosylation site" description="N-linked (GlcNAc...) asparagine" evidence="1">
    <location>
        <position position="507"/>
    </location>
</feature>
<feature type="disulfide bond" evidence="4">
    <location>
        <begin position="441"/>
        <end position="447"/>
    </location>
</feature>
<feature type="splice variant" id="VSP_009082" description="In isoform A." evidence="7">
    <location>
        <begin position="1"/>
        <end position="346"/>
    </location>
</feature>
<feature type="splice variant" id="VSP_009083" description="In isoform A." evidence="7">
    <original>ALTLTPNLTQ</original>
    <variation>MDCFCSRSQE</variation>
    <location>
        <begin position="347"/>
        <end position="356"/>
    </location>
</feature>
<dbReference type="EC" id="3.5.1.28"/>
<dbReference type="EMBL" id="AF541955">
    <property type="protein sequence ID" value="AAO41115.1"/>
    <property type="molecule type" value="mRNA"/>
</dbReference>
<dbReference type="EMBL" id="AF541956">
    <property type="protein sequence ID" value="AAO41116.1"/>
    <property type="molecule type" value="mRNA"/>
</dbReference>
<dbReference type="RefSeq" id="NP_998903.1">
    <molecule id="Q866Y3-1"/>
    <property type="nucleotide sequence ID" value="NM_213738.1"/>
</dbReference>
<dbReference type="SMR" id="Q866Y3"/>
<dbReference type="FunCoup" id="Q866Y3">
    <property type="interactions" value="198"/>
</dbReference>
<dbReference type="STRING" id="9823.ENSSSCP00000028092"/>
<dbReference type="GlyCosmos" id="Q866Y3">
    <property type="glycosylation" value="2 sites, No reported glycans"/>
</dbReference>
<dbReference type="GlyGen" id="Q866Y3">
    <property type="glycosylation" value="2 sites"/>
</dbReference>
<dbReference type="PaxDb" id="9823-ENSSSCP00000022015"/>
<dbReference type="PeptideAtlas" id="Q866Y3"/>
<dbReference type="GeneID" id="396557"/>
<dbReference type="KEGG" id="ssc:396557"/>
<dbReference type="CTD" id="114770"/>
<dbReference type="eggNOG" id="ENOG502QR3D">
    <property type="taxonomic scope" value="Eukaryota"/>
</dbReference>
<dbReference type="InParanoid" id="Q866Y3"/>
<dbReference type="OrthoDB" id="10001926at2759"/>
<dbReference type="Proteomes" id="UP000008227">
    <property type="component" value="Unplaced"/>
</dbReference>
<dbReference type="Proteomes" id="UP000314985">
    <property type="component" value="Unplaced"/>
</dbReference>
<dbReference type="Proteomes" id="UP000694570">
    <property type="component" value="Unplaced"/>
</dbReference>
<dbReference type="Proteomes" id="UP000694571">
    <property type="component" value="Unplaced"/>
</dbReference>
<dbReference type="Proteomes" id="UP000694720">
    <property type="component" value="Unplaced"/>
</dbReference>
<dbReference type="Proteomes" id="UP000694722">
    <property type="component" value="Unplaced"/>
</dbReference>
<dbReference type="Proteomes" id="UP000694723">
    <property type="component" value="Unplaced"/>
</dbReference>
<dbReference type="Proteomes" id="UP000694724">
    <property type="component" value="Unplaced"/>
</dbReference>
<dbReference type="Proteomes" id="UP000694725">
    <property type="component" value="Unplaced"/>
</dbReference>
<dbReference type="Proteomes" id="UP000694726">
    <property type="component" value="Unplaced"/>
</dbReference>
<dbReference type="Proteomes" id="UP000694727">
    <property type="component" value="Unplaced"/>
</dbReference>
<dbReference type="Proteomes" id="UP000694728">
    <property type="component" value="Unplaced"/>
</dbReference>
<dbReference type="GO" id="GO:0005576">
    <property type="term" value="C:extracellular region"/>
    <property type="evidence" value="ECO:0007669"/>
    <property type="project" value="UniProtKB-SubCell"/>
</dbReference>
<dbReference type="GO" id="GO:0016020">
    <property type="term" value="C:membrane"/>
    <property type="evidence" value="ECO:0007669"/>
    <property type="project" value="UniProtKB-SubCell"/>
</dbReference>
<dbReference type="GO" id="GO:0008745">
    <property type="term" value="F:N-acetylmuramoyl-L-alanine amidase activity"/>
    <property type="evidence" value="ECO:0007669"/>
    <property type="project" value="UniProtKB-EC"/>
</dbReference>
<dbReference type="GO" id="GO:0042834">
    <property type="term" value="F:peptidoglycan binding"/>
    <property type="evidence" value="ECO:0000250"/>
    <property type="project" value="UniProtKB"/>
</dbReference>
<dbReference type="GO" id="GO:0016019">
    <property type="term" value="F:peptidoglycan immune receptor activity"/>
    <property type="evidence" value="ECO:0000250"/>
    <property type="project" value="UniProtKB"/>
</dbReference>
<dbReference type="GO" id="GO:0008270">
    <property type="term" value="F:zinc ion binding"/>
    <property type="evidence" value="ECO:0007669"/>
    <property type="project" value="InterPro"/>
</dbReference>
<dbReference type="GO" id="GO:0042742">
    <property type="term" value="P:defense response to bacterium"/>
    <property type="evidence" value="ECO:0000318"/>
    <property type="project" value="GO_Central"/>
</dbReference>
<dbReference type="GO" id="GO:0050830">
    <property type="term" value="P:defense response to Gram-positive bacterium"/>
    <property type="evidence" value="ECO:0000250"/>
    <property type="project" value="UniProtKB"/>
</dbReference>
<dbReference type="GO" id="GO:0016045">
    <property type="term" value="P:detection of bacterium"/>
    <property type="evidence" value="ECO:0000250"/>
    <property type="project" value="UniProtKB"/>
</dbReference>
<dbReference type="GO" id="GO:0006955">
    <property type="term" value="P:immune response"/>
    <property type="evidence" value="ECO:0000318"/>
    <property type="project" value="GO_Central"/>
</dbReference>
<dbReference type="GO" id="GO:0009253">
    <property type="term" value="P:peptidoglycan catabolic process"/>
    <property type="evidence" value="ECO:0007669"/>
    <property type="project" value="InterPro"/>
</dbReference>
<dbReference type="CDD" id="cd06583">
    <property type="entry name" value="PGRP"/>
    <property type="match status" value="1"/>
</dbReference>
<dbReference type="FunFam" id="3.40.80.10:FF:000001">
    <property type="entry name" value="Peptidoglycan recognition protein 1"/>
    <property type="match status" value="1"/>
</dbReference>
<dbReference type="Gene3D" id="3.40.80.10">
    <property type="entry name" value="Peptidoglycan recognition protein-like"/>
    <property type="match status" value="1"/>
</dbReference>
<dbReference type="InterPro" id="IPR036505">
    <property type="entry name" value="Amidase/PGRP_sf"/>
</dbReference>
<dbReference type="InterPro" id="IPR002502">
    <property type="entry name" value="Amidase_domain"/>
</dbReference>
<dbReference type="InterPro" id="IPR015510">
    <property type="entry name" value="PGRP"/>
</dbReference>
<dbReference type="InterPro" id="IPR006619">
    <property type="entry name" value="PGRP_domain_met/bac"/>
</dbReference>
<dbReference type="PANTHER" id="PTHR11022:SF66">
    <property type="entry name" value="N-ACETYLMURAMOYL-L-ALANINE AMIDASE"/>
    <property type="match status" value="1"/>
</dbReference>
<dbReference type="PANTHER" id="PTHR11022">
    <property type="entry name" value="PEPTIDOGLYCAN RECOGNITION PROTEIN"/>
    <property type="match status" value="1"/>
</dbReference>
<dbReference type="Pfam" id="PF01510">
    <property type="entry name" value="Amidase_2"/>
    <property type="match status" value="1"/>
</dbReference>
<dbReference type="SMART" id="SM00644">
    <property type="entry name" value="Ami_2"/>
    <property type="match status" value="1"/>
</dbReference>
<dbReference type="SMART" id="SM00701">
    <property type="entry name" value="PGRP"/>
    <property type="match status" value="1"/>
</dbReference>
<dbReference type="SUPFAM" id="SSF55846">
    <property type="entry name" value="N-acetylmuramoyl-L-alanine amidase-like"/>
    <property type="match status" value="1"/>
</dbReference>
<proteinExistence type="evidence at transcript level"/>
<accession>Q866Y3</accession>
<accession>Q866Y4</accession>
<organism>
    <name type="scientific">Sus scrofa</name>
    <name type="common">Pig</name>
    <dbReference type="NCBI Taxonomy" id="9823"/>
    <lineage>
        <taxon>Eukaryota</taxon>
        <taxon>Metazoa</taxon>
        <taxon>Chordata</taxon>
        <taxon>Craniata</taxon>
        <taxon>Vertebrata</taxon>
        <taxon>Euteleostomi</taxon>
        <taxon>Mammalia</taxon>
        <taxon>Eutheria</taxon>
        <taxon>Laurasiatheria</taxon>
        <taxon>Artiodactyla</taxon>
        <taxon>Suina</taxon>
        <taxon>Suidae</taxon>
        <taxon>Sus</taxon>
    </lineage>
</organism>
<reference key="1">
    <citation type="submission" date="2002-08" db="EMBL/GenBank/DDBJ databases">
        <title>Characterization of porcine peptidoglycan recognition proteins: gene cloning and regulation on innate immunity.</title>
        <authorList>
            <person name="Sang Y."/>
            <person name="Ross C.R."/>
            <person name="Blecha F."/>
        </authorList>
    </citation>
    <scope>NUCLEOTIDE SEQUENCE [MRNA] (ISOFORMS A AND B)</scope>
</reference>
<evidence type="ECO:0000250" key="1"/>
<evidence type="ECO:0000250" key="2">
    <source>
        <dbReference type="UniProtKB" id="P00806"/>
    </source>
</evidence>
<evidence type="ECO:0000250" key="3">
    <source>
        <dbReference type="UniProtKB" id="Q8INK6"/>
    </source>
</evidence>
<evidence type="ECO:0000250" key="4">
    <source>
        <dbReference type="UniProtKB" id="Q96PD5"/>
    </source>
</evidence>
<evidence type="ECO:0000255" key="5"/>
<evidence type="ECO:0000256" key="6">
    <source>
        <dbReference type="SAM" id="MobiDB-lite"/>
    </source>
</evidence>
<evidence type="ECO:0000303" key="7">
    <source ref="1"/>
</evidence>
<evidence type="ECO:0000305" key="8"/>
<gene>
    <name type="primary">PGLYRP2</name>
    <name type="synonym">PGRPL</name>
</gene>